<keyword id="KW-0534">Nitrate assimilation</keyword>
<keyword id="KW-1185">Reference proteome</keyword>
<accession>Q96X43</accession>
<accession>Q6CQ56</accession>
<sequence length="389" mass="44395">MQQDMQNGGPGNTISNLSSALRQVNLGNSNTTTDQSNISIDFNQQQLLEEANQGSINAYNAQQQQQEHLQQQAQQQQLHMQQLQQAQQQQAQQQAHQQQQQVHQVQHQHVQQDHMPIGQSQQQAMYQGPNPIDSSRITKFFQNQPMEGYTLFSHRSAPNGFKVAIVLSELNMHYNTIFLDFNLGEHRAPEFVAINPNARVPALIDHNMENLSIWESGAIILHVVNKHYKETGNPLLWSDSLADQAQINAWLFFQTSGHAPMIGQALHFRYFHSQKVKSAVDRYTDEVRRVYGVVEMALAERREALIMDLDSENAAAYSAGTTPLSQSRFFDYPVWLVGDKITVADLSFVPWNNVVDRIGINIKVEFPEVYKWTKHMMRRPAVIKALRGE</sequence>
<evidence type="ECO:0000250" key="1"/>
<evidence type="ECO:0000305" key="2"/>
<feature type="chain" id="PRO_0000186008" description="Protein URE2">
    <location>
        <begin position="1"/>
        <end position="389"/>
    </location>
</feature>
<feature type="domain" description="GST N-terminal">
    <location>
        <begin position="147"/>
        <end position="231"/>
    </location>
</feature>
<feature type="domain" description="GST C-terminal">
    <location>
        <begin position="240"/>
        <end position="389"/>
    </location>
</feature>
<comment type="function">
    <text evidence="1">Plays an important role in the cellular response to the nitrogen source. URE2 gene plays a major part in the repression of GLN1 and GDH2 genes by glutamine, and is required for the inactivation of glutamine synthetase. URE2 gene product may catalytically inactivate GLN3 in response to an increase in the intracellular concentration of glutamine (By similarity).</text>
</comment>
<comment type="subunit">
    <text evidence="1">Homodimer.</text>
</comment>
<comment type="similarity">
    <text evidence="2">Belongs to the GST superfamily.</text>
</comment>
<protein>
    <recommendedName>
        <fullName>Protein URE2</fullName>
    </recommendedName>
</protein>
<name>URE2_KLULA</name>
<reference key="1">
    <citation type="submission" date="2000-04" db="EMBL/GenBank/DDBJ databases">
        <title>Prion characteristics of the URE2 protein of various yeast species.</title>
        <authorList>
            <person name="Fernandez-Bellot E."/>
            <person name="Baudin-Baillieu A."/>
            <person name="Cullin C."/>
        </authorList>
    </citation>
    <scope>NUCLEOTIDE SEQUENCE [GENOMIC DNA]</scope>
</reference>
<reference key="2">
    <citation type="journal article" date="2004" name="Nature">
        <title>Genome evolution in yeasts.</title>
        <authorList>
            <person name="Dujon B."/>
            <person name="Sherman D."/>
            <person name="Fischer G."/>
            <person name="Durrens P."/>
            <person name="Casaregola S."/>
            <person name="Lafontaine I."/>
            <person name="de Montigny J."/>
            <person name="Marck C."/>
            <person name="Neuveglise C."/>
            <person name="Talla E."/>
            <person name="Goffard N."/>
            <person name="Frangeul L."/>
            <person name="Aigle M."/>
            <person name="Anthouard V."/>
            <person name="Babour A."/>
            <person name="Barbe V."/>
            <person name="Barnay S."/>
            <person name="Blanchin S."/>
            <person name="Beckerich J.-M."/>
            <person name="Beyne E."/>
            <person name="Bleykasten C."/>
            <person name="Boisrame A."/>
            <person name="Boyer J."/>
            <person name="Cattolico L."/>
            <person name="Confanioleri F."/>
            <person name="de Daruvar A."/>
            <person name="Despons L."/>
            <person name="Fabre E."/>
            <person name="Fairhead C."/>
            <person name="Ferry-Dumazet H."/>
            <person name="Groppi A."/>
            <person name="Hantraye F."/>
            <person name="Hennequin C."/>
            <person name="Jauniaux N."/>
            <person name="Joyet P."/>
            <person name="Kachouri R."/>
            <person name="Kerrest A."/>
            <person name="Koszul R."/>
            <person name="Lemaire M."/>
            <person name="Lesur I."/>
            <person name="Ma L."/>
            <person name="Muller H."/>
            <person name="Nicaud J.-M."/>
            <person name="Nikolski M."/>
            <person name="Oztas S."/>
            <person name="Ozier-Kalogeropoulos O."/>
            <person name="Pellenz S."/>
            <person name="Potier S."/>
            <person name="Richard G.-F."/>
            <person name="Straub M.-L."/>
            <person name="Suleau A."/>
            <person name="Swennen D."/>
            <person name="Tekaia F."/>
            <person name="Wesolowski-Louvel M."/>
            <person name="Westhof E."/>
            <person name="Wirth B."/>
            <person name="Zeniou-Meyer M."/>
            <person name="Zivanovic Y."/>
            <person name="Bolotin-Fukuhara M."/>
            <person name="Thierry A."/>
            <person name="Bouchier C."/>
            <person name="Caudron B."/>
            <person name="Scarpelli C."/>
            <person name="Gaillardin C."/>
            <person name="Weissenbach J."/>
            <person name="Wincker P."/>
            <person name="Souciet J.-L."/>
        </authorList>
    </citation>
    <scope>NUCLEOTIDE SEQUENCE [LARGE SCALE GENOMIC DNA]</scope>
    <source>
        <strain>ATCC 8585 / CBS 2359 / DSM 70799 / NBRC 1267 / NRRL Y-1140 / WM37</strain>
    </source>
</reference>
<gene>
    <name type="primary">URE2</name>
    <name type="ordered locus">KLLA0D19624g</name>
</gene>
<dbReference type="EMBL" id="AF260776">
    <property type="protein sequence ID" value="AAK51642.1"/>
    <property type="molecule type" value="Genomic_DNA"/>
</dbReference>
<dbReference type="EMBL" id="CR382124">
    <property type="protein sequence ID" value="CAH01029.1"/>
    <property type="molecule type" value="Genomic_DNA"/>
</dbReference>
<dbReference type="RefSeq" id="XP_453933.1">
    <property type="nucleotide sequence ID" value="XM_453933.1"/>
</dbReference>
<dbReference type="SMR" id="Q96X43"/>
<dbReference type="FunCoup" id="Q96X43">
    <property type="interactions" value="758"/>
</dbReference>
<dbReference type="STRING" id="284590.Q96X43"/>
<dbReference type="PaxDb" id="284590-Q96X43"/>
<dbReference type="KEGG" id="kla:KLLA0_D19624g"/>
<dbReference type="eggNOG" id="KOG0867">
    <property type="taxonomic scope" value="Eukaryota"/>
</dbReference>
<dbReference type="HOGENOM" id="CLU_011226_14_1_1"/>
<dbReference type="InParanoid" id="Q96X43"/>
<dbReference type="OMA" id="YEPHRID"/>
<dbReference type="Proteomes" id="UP000000598">
    <property type="component" value="Chromosome D"/>
</dbReference>
<dbReference type="GO" id="GO:0003714">
    <property type="term" value="F:transcription corepressor activity"/>
    <property type="evidence" value="ECO:0007669"/>
    <property type="project" value="InterPro"/>
</dbReference>
<dbReference type="GO" id="GO:0042128">
    <property type="term" value="P:nitrate assimilation"/>
    <property type="evidence" value="ECO:0007669"/>
    <property type="project" value="UniProtKB-KW"/>
</dbReference>
<dbReference type="GO" id="GO:0006808">
    <property type="term" value="P:regulation of nitrogen utilization"/>
    <property type="evidence" value="ECO:0007669"/>
    <property type="project" value="InterPro"/>
</dbReference>
<dbReference type="CDD" id="cd10293">
    <property type="entry name" value="GST_C_Ure2p"/>
    <property type="match status" value="1"/>
</dbReference>
<dbReference type="CDD" id="cd03048">
    <property type="entry name" value="GST_N_Ure2p_like"/>
    <property type="match status" value="1"/>
</dbReference>
<dbReference type="FunFam" id="1.20.1050.10:FF:000034">
    <property type="entry name" value="Transcriptional regulator URE2"/>
    <property type="match status" value="1"/>
</dbReference>
<dbReference type="Gene3D" id="1.20.1050.10">
    <property type="match status" value="1"/>
</dbReference>
<dbReference type="Gene3D" id="3.40.30.10">
    <property type="entry name" value="Glutaredoxin"/>
    <property type="match status" value="1"/>
</dbReference>
<dbReference type="InterPro" id="IPR010987">
    <property type="entry name" value="Glutathione-S-Trfase_C-like"/>
</dbReference>
<dbReference type="InterPro" id="IPR036282">
    <property type="entry name" value="Glutathione-S-Trfase_C_sf"/>
</dbReference>
<dbReference type="InterPro" id="IPR040079">
    <property type="entry name" value="Glutathione_S-Trfase"/>
</dbReference>
<dbReference type="InterPro" id="IPR004045">
    <property type="entry name" value="Glutathione_S-Trfase_N"/>
</dbReference>
<dbReference type="InterPro" id="IPR004046">
    <property type="entry name" value="GST_C"/>
</dbReference>
<dbReference type="InterPro" id="IPR036249">
    <property type="entry name" value="Thioredoxin-like_sf"/>
</dbReference>
<dbReference type="InterPro" id="IPR017298">
    <property type="entry name" value="Ure2"/>
</dbReference>
<dbReference type="PANTHER" id="PTHR44051">
    <property type="entry name" value="GLUTATHIONE S-TRANSFERASE-RELATED"/>
    <property type="match status" value="1"/>
</dbReference>
<dbReference type="PANTHER" id="PTHR44051:SF3">
    <property type="entry name" value="TRANSCRIPTIONAL REGULATOR URE2"/>
    <property type="match status" value="1"/>
</dbReference>
<dbReference type="Pfam" id="PF00043">
    <property type="entry name" value="GST_C"/>
    <property type="match status" value="1"/>
</dbReference>
<dbReference type="Pfam" id="PF02798">
    <property type="entry name" value="GST_N"/>
    <property type="match status" value="1"/>
</dbReference>
<dbReference type="PIRSF" id="PIRSF037861">
    <property type="entry name" value="Prion_URE2"/>
    <property type="match status" value="1"/>
</dbReference>
<dbReference type="SFLD" id="SFLDS00019">
    <property type="entry name" value="Glutathione_Transferase_(cytos"/>
    <property type="match status" value="1"/>
</dbReference>
<dbReference type="SFLD" id="SFLDG00358">
    <property type="entry name" value="Main_(cytGST)"/>
    <property type="match status" value="1"/>
</dbReference>
<dbReference type="SUPFAM" id="SSF47616">
    <property type="entry name" value="GST C-terminal domain-like"/>
    <property type="match status" value="1"/>
</dbReference>
<dbReference type="SUPFAM" id="SSF52833">
    <property type="entry name" value="Thioredoxin-like"/>
    <property type="match status" value="1"/>
</dbReference>
<dbReference type="PROSITE" id="PS50405">
    <property type="entry name" value="GST_CTER"/>
    <property type="match status" value="1"/>
</dbReference>
<dbReference type="PROSITE" id="PS50404">
    <property type="entry name" value="GST_NTER"/>
    <property type="match status" value="1"/>
</dbReference>
<proteinExistence type="inferred from homology"/>
<organism>
    <name type="scientific">Kluyveromyces lactis (strain ATCC 8585 / CBS 2359 / DSM 70799 / NBRC 1267 / NRRL Y-1140 / WM37)</name>
    <name type="common">Yeast</name>
    <name type="synonym">Candida sphaerica</name>
    <dbReference type="NCBI Taxonomy" id="284590"/>
    <lineage>
        <taxon>Eukaryota</taxon>
        <taxon>Fungi</taxon>
        <taxon>Dikarya</taxon>
        <taxon>Ascomycota</taxon>
        <taxon>Saccharomycotina</taxon>
        <taxon>Saccharomycetes</taxon>
        <taxon>Saccharomycetales</taxon>
        <taxon>Saccharomycetaceae</taxon>
        <taxon>Kluyveromyces</taxon>
    </lineage>
</organism>